<sequence>MELTPREKDKLLIFTAALLAERRRARGLKLNYPEAVALITAAIMEGARDGRTVAELMHEGTTVLSRDDVMDGVAEMIPEIQVEATFPDGTKLVTVHHPIV</sequence>
<reference key="1">
    <citation type="journal article" date="2010" name="PLoS ONE">
        <title>The complete multipartite genome sequence of Cupriavidus necator JMP134, a versatile pollutant degrader.</title>
        <authorList>
            <person name="Lykidis A."/>
            <person name="Perez-Pantoja D."/>
            <person name="Ledger T."/>
            <person name="Mavromatis K."/>
            <person name="Anderson I.J."/>
            <person name="Ivanova N.N."/>
            <person name="Hooper S.D."/>
            <person name="Lapidus A."/>
            <person name="Lucas S."/>
            <person name="Gonzalez B."/>
            <person name="Kyrpides N.C."/>
        </authorList>
    </citation>
    <scope>NUCLEOTIDE SEQUENCE [LARGE SCALE GENOMIC DNA]</scope>
    <source>
        <strain>JMP134 / LMG 1197</strain>
    </source>
</reference>
<proteinExistence type="inferred from homology"/>
<accession>Q473R2</accession>
<protein>
    <recommendedName>
        <fullName evidence="1">Urease subunit gamma</fullName>
        <ecNumber evidence="1">3.5.1.5</ecNumber>
    </recommendedName>
    <alternativeName>
        <fullName evidence="1">Urea amidohydrolase subunit gamma</fullName>
    </alternativeName>
</protein>
<dbReference type="EC" id="3.5.1.5" evidence="1"/>
<dbReference type="EMBL" id="CP000090">
    <property type="protein sequence ID" value="AAZ60371.1"/>
    <property type="molecule type" value="Genomic_DNA"/>
</dbReference>
<dbReference type="SMR" id="Q473R2"/>
<dbReference type="STRING" id="264198.Reut_A0992"/>
<dbReference type="KEGG" id="reu:Reut_A0992"/>
<dbReference type="eggNOG" id="COG0831">
    <property type="taxonomic scope" value="Bacteria"/>
</dbReference>
<dbReference type="HOGENOM" id="CLU_145825_1_0_4"/>
<dbReference type="OrthoDB" id="9797217at2"/>
<dbReference type="UniPathway" id="UPA00258">
    <property type="reaction ID" value="UER00370"/>
</dbReference>
<dbReference type="GO" id="GO:0005737">
    <property type="term" value="C:cytoplasm"/>
    <property type="evidence" value="ECO:0007669"/>
    <property type="project" value="UniProtKB-SubCell"/>
</dbReference>
<dbReference type="GO" id="GO:0016151">
    <property type="term" value="F:nickel cation binding"/>
    <property type="evidence" value="ECO:0007669"/>
    <property type="project" value="InterPro"/>
</dbReference>
<dbReference type="GO" id="GO:0009039">
    <property type="term" value="F:urease activity"/>
    <property type="evidence" value="ECO:0007669"/>
    <property type="project" value="UniProtKB-UniRule"/>
</dbReference>
<dbReference type="GO" id="GO:0043419">
    <property type="term" value="P:urea catabolic process"/>
    <property type="evidence" value="ECO:0007669"/>
    <property type="project" value="UniProtKB-UniRule"/>
</dbReference>
<dbReference type="CDD" id="cd00390">
    <property type="entry name" value="Urease_gamma"/>
    <property type="match status" value="1"/>
</dbReference>
<dbReference type="Gene3D" id="3.30.280.10">
    <property type="entry name" value="Urease, gamma-like subunit"/>
    <property type="match status" value="1"/>
</dbReference>
<dbReference type="HAMAP" id="MF_00739">
    <property type="entry name" value="Urease_gamma"/>
    <property type="match status" value="1"/>
</dbReference>
<dbReference type="InterPro" id="IPR012010">
    <property type="entry name" value="Urease_gamma"/>
</dbReference>
<dbReference type="InterPro" id="IPR002026">
    <property type="entry name" value="Urease_gamma/gamma-beta_su"/>
</dbReference>
<dbReference type="InterPro" id="IPR036463">
    <property type="entry name" value="Urease_gamma_sf"/>
</dbReference>
<dbReference type="InterPro" id="IPR050069">
    <property type="entry name" value="Urease_subunit"/>
</dbReference>
<dbReference type="NCBIfam" id="NF009712">
    <property type="entry name" value="PRK13241.1"/>
    <property type="match status" value="1"/>
</dbReference>
<dbReference type="NCBIfam" id="TIGR00193">
    <property type="entry name" value="urease_gam"/>
    <property type="match status" value="1"/>
</dbReference>
<dbReference type="PANTHER" id="PTHR33569">
    <property type="entry name" value="UREASE"/>
    <property type="match status" value="1"/>
</dbReference>
<dbReference type="PANTHER" id="PTHR33569:SF1">
    <property type="entry name" value="UREASE"/>
    <property type="match status" value="1"/>
</dbReference>
<dbReference type="Pfam" id="PF00547">
    <property type="entry name" value="Urease_gamma"/>
    <property type="match status" value="1"/>
</dbReference>
<dbReference type="PIRSF" id="PIRSF001223">
    <property type="entry name" value="Urease_gamma"/>
    <property type="match status" value="1"/>
</dbReference>
<dbReference type="SUPFAM" id="SSF54111">
    <property type="entry name" value="Urease, gamma-subunit"/>
    <property type="match status" value="1"/>
</dbReference>
<comment type="catalytic activity">
    <reaction evidence="1">
        <text>urea + 2 H2O + H(+) = hydrogencarbonate + 2 NH4(+)</text>
        <dbReference type="Rhea" id="RHEA:20557"/>
        <dbReference type="ChEBI" id="CHEBI:15377"/>
        <dbReference type="ChEBI" id="CHEBI:15378"/>
        <dbReference type="ChEBI" id="CHEBI:16199"/>
        <dbReference type="ChEBI" id="CHEBI:17544"/>
        <dbReference type="ChEBI" id="CHEBI:28938"/>
        <dbReference type="EC" id="3.5.1.5"/>
    </reaction>
</comment>
<comment type="pathway">
    <text evidence="1">Nitrogen metabolism; urea degradation; CO(2) and NH(3) from urea (urease route): step 1/1.</text>
</comment>
<comment type="subunit">
    <text evidence="1">Heterotrimer of UreA (gamma), UreB (beta) and UreC (alpha) subunits. Three heterotrimers associate to form the active enzyme.</text>
</comment>
<comment type="subcellular location">
    <subcellularLocation>
        <location evidence="1">Cytoplasm</location>
    </subcellularLocation>
</comment>
<comment type="similarity">
    <text evidence="1">Belongs to the urease gamma subunit family.</text>
</comment>
<evidence type="ECO:0000255" key="1">
    <source>
        <dbReference type="HAMAP-Rule" id="MF_00739"/>
    </source>
</evidence>
<gene>
    <name evidence="1" type="primary">ureA</name>
    <name type="ordered locus">Reut_A0992</name>
</gene>
<feature type="chain" id="PRO_0000234214" description="Urease subunit gamma">
    <location>
        <begin position="1"/>
        <end position="100"/>
    </location>
</feature>
<organism>
    <name type="scientific">Cupriavidus pinatubonensis (strain JMP 134 / LMG 1197)</name>
    <name type="common">Cupriavidus necator (strain JMP 134)</name>
    <dbReference type="NCBI Taxonomy" id="264198"/>
    <lineage>
        <taxon>Bacteria</taxon>
        <taxon>Pseudomonadati</taxon>
        <taxon>Pseudomonadota</taxon>
        <taxon>Betaproteobacteria</taxon>
        <taxon>Burkholderiales</taxon>
        <taxon>Burkholderiaceae</taxon>
        <taxon>Cupriavidus</taxon>
    </lineage>
</organism>
<keyword id="KW-0963">Cytoplasm</keyword>
<keyword id="KW-0378">Hydrolase</keyword>
<name>URE3_CUPPJ</name>